<name>AL3I1_ARATH</name>
<evidence type="ECO:0000250" key="1"/>
<evidence type="ECO:0000255" key="2"/>
<evidence type="ECO:0000255" key="3">
    <source>
        <dbReference type="PROSITE-ProRule" id="PRU10008"/>
    </source>
</evidence>
<evidence type="ECO:0000269" key="4">
    <source>
    </source>
</evidence>
<evidence type="ECO:0000269" key="5">
    <source>
    </source>
</evidence>
<evidence type="ECO:0000269" key="6">
    <source>
    </source>
</evidence>
<evidence type="ECO:0000269" key="7">
    <source>
    </source>
</evidence>
<evidence type="ECO:0000305" key="8"/>
<accession>Q8W033</accession>
<accession>Q940H4</accession>
<accession>Q9SYY9</accession>
<proteinExistence type="evidence at protein level"/>
<keyword id="KW-0025">Alternative splicing</keyword>
<keyword id="KW-0150">Chloroplast</keyword>
<keyword id="KW-1015">Disulfide bond</keyword>
<keyword id="KW-0520">NAD</keyword>
<keyword id="KW-0560">Oxidoreductase</keyword>
<keyword id="KW-0934">Plastid</keyword>
<keyword id="KW-1185">Reference proteome</keyword>
<keyword id="KW-0346">Stress response</keyword>
<keyword id="KW-0809">Transit peptide</keyword>
<comment type="function">
    <text evidence="5 7">Involved in oxidative stress tolerance by detoxifying reactive aldehydes derived from lipid peroxidation. Medium- to long-chain saturated aldehydes are preferred substrates, while the short-chain aldehyde propanal is a weak substrate. Can use both NAD(+) and NADP(+), but the coenzyme preference is substrate dependent.</text>
</comment>
<comment type="catalytic activity">
    <reaction evidence="7">
        <text>an aldehyde + NAD(+) + H2O = a carboxylate + NADH + 2 H(+)</text>
        <dbReference type="Rhea" id="RHEA:16185"/>
        <dbReference type="ChEBI" id="CHEBI:15377"/>
        <dbReference type="ChEBI" id="CHEBI:15378"/>
        <dbReference type="ChEBI" id="CHEBI:17478"/>
        <dbReference type="ChEBI" id="CHEBI:29067"/>
        <dbReference type="ChEBI" id="CHEBI:57540"/>
        <dbReference type="ChEBI" id="CHEBI:57945"/>
        <dbReference type="EC" id="1.2.1.3"/>
    </reaction>
</comment>
<comment type="activity regulation">
    <text evidence="7">Thiol-based regulation. Inactivation after dimerization under oxidizing conditions.</text>
</comment>
<comment type="biophysicochemical properties">
    <kinetics>
        <KM evidence="7">8053 uM for propionaldehyde</KM>
        <KM evidence="7">111 uM for hexanal</KM>
        <KM evidence="7">24 uM for octanal</KM>
        <KM evidence="7">7 uM for nonanal</KM>
        <KM evidence="7">1.3 uM for dodecanal</KM>
        <KM evidence="7">151 uM for trans-2-hexenal</KM>
        <KM evidence="7">5.5 uM for trans-2-nonenal</KM>
        <KM evidence="7">21 uM for 4-hydroxynonenal</KM>
        <KM evidence="7">71 uM for NAD(+) (in the presence of hexanal as co-substrate)</KM>
        <KM evidence="7">1868 uM for NADP(+) (in the presence of hexanal as co-substrate)</KM>
        <KM evidence="7">53 uM for NAD(+) (in the presence of trans-2-nonenal as co-substrate)</KM>
        <KM evidence="7">87 uM for NADP(+) (in the presence of trans-2-nonenal as co-substrate)</KM>
        <Vmax evidence="7">10.1 umol/min/mg enzyme with propionaldehyde as substrate</Vmax>
        <Vmax evidence="7">17.3 umol/min/mg enzyme with hexanal as substrate</Vmax>
        <Vmax evidence="7">16.6 umol/min/mg enzyme with octanal as substrate</Vmax>
        <Vmax evidence="7">20.0 umol/min/mg enzyme with nonanal as substrate</Vmax>
        <Vmax evidence="7">18.8 umol/min/mg enzyme with dodecanal as substrate</Vmax>
        <Vmax evidence="7">1.5 umol/min/mg enzyme with trans-2-hexenal as substrate</Vmax>
        <Vmax evidence="7">1.6 umol/min/mg enzyme with trans-2-nonenal as substrate</Vmax>
        <Vmax evidence="7">0.6 umol/min/mg enzyme with 4-hydroxynonenal as substrate</Vmax>
    </kinetics>
    <phDependence>
        <text evidence="7">Optimum pH is 9.0.</text>
    </phDependence>
</comment>
<comment type="subunit">
    <text evidence="7">Homodimer and homomultimer.</text>
</comment>
<comment type="subcellular location">
    <subcellularLocation>
        <location evidence="8">Plastid</location>
        <location evidence="8">Chloroplast</location>
    </subcellularLocation>
</comment>
<comment type="alternative products">
    <event type="alternative splicing"/>
    <isoform>
        <id>Q8W033-1</id>
        <name>1</name>
        <sequence type="displayed"/>
    </isoform>
    <text>A number of isoforms are produced. According to EST sequences.</text>
</comment>
<comment type="induction">
    <text evidence="4 5 6">By abscisic acid (ABA), dehydration, salt stress in plantlets. Induced by heavy metals and H(2)O(2).</text>
</comment>
<comment type="miscellaneous">
    <text>Plants overexpressing ALDH3I1 show improved tolerance when exposed to dehydration, salt stress, heavy metals and H(2)O(2).</text>
</comment>
<comment type="similarity">
    <text evidence="8">Belongs to the aldehyde dehydrogenase family.</text>
</comment>
<comment type="sequence caution" evidence="8">
    <conflict type="erroneous gene model prediction">
        <sequence resource="EMBL-CDS" id="CAB36701"/>
    </conflict>
</comment>
<comment type="sequence caution" evidence="8">
    <conflict type="erroneous gene model prediction">
        <sequence resource="EMBL-CDS" id="CAB80141"/>
    </conflict>
</comment>
<sequence length="550" mass="60173">MTKLLEINHIQTLCFAKGFSPARLNVATSPFRISRRGGGGYCSNACIPYRLKFTCYATLSAVVKEQASDFSGKEAALLVDELRSNFNSGRTKSYEWRISQLQNIARMIDEKEKCITEALYQDLSKPELEAFLAEISNTKSSCMLAIKELKNWMAPETVKTSVTTFPSSAQIVSEPLGVVLVISAWNFPFLLSVEPVIGAIAAGNAVVLKPSEIAPAASSLLAKLFSEYLDNTTIRVIEGGVPETTALLDQKWDKIFFTGGARVARIIMAAAARNLTPVVLELGGKCPALVDSDVNLQVAARRIIAGKWACNSGQACIGVDYVITTKDFASKLIDALKTELETFFGQNALESKDLSRIVNSFHFKRLESMLKENGVANKIVHGGRITEDKLKISPTILLDVPEASSMMQEEIFGPLLPIITVQKIEDGFQVIRSKPKPLAAYLFTNNKELEKQFVQDVSAGGITINDTVLHVTVKDLPFGGVGESGIGAYHGKFSYETFSHKKGVLYRSFSGDADLRYPPYTPKKKMVLKALLSSNIFAAILAFFGFSKDS</sequence>
<organism>
    <name type="scientific">Arabidopsis thaliana</name>
    <name type="common">Mouse-ear cress</name>
    <dbReference type="NCBI Taxonomy" id="3702"/>
    <lineage>
        <taxon>Eukaryota</taxon>
        <taxon>Viridiplantae</taxon>
        <taxon>Streptophyta</taxon>
        <taxon>Embryophyta</taxon>
        <taxon>Tracheophyta</taxon>
        <taxon>Spermatophyta</taxon>
        <taxon>Magnoliopsida</taxon>
        <taxon>eudicotyledons</taxon>
        <taxon>Gunneridae</taxon>
        <taxon>Pentapetalae</taxon>
        <taxon>rosids</taxon>
        <taxon>malvids</taxon>
        <taxon>Brassicales</taxon>
        <taxon>Brassicaceae</taxon>
        <taxon>Camelineae</taxon>
        <taxon>Arabidopsis</taxon>
    </lineage>
</organism>
<dbReference type="EC" id="1.2.1.3"/>
<dbReference type="EMBL" id="AJ306961">
    <property type="protein sequence ID" value="CAC84903.1"/>
    <property type="molecule type" value="mRNA"/>
</dbReference>
<dbReference type="EMBL" id="AL035521">
    <property type="protein sequence ID" value="CAB36701.1"/>
    <property type="status" value="ALT_SEQ"/>
    <property type="molecule type" value="Genomic_DNA"/>
</dbReference>
<dbReference type="EMBL" id="AL161585">
    <property type="protein sequence ID" value="CAB80141.1"/>
    <property type="status" value="ALT_SEQ"/>
    <property type="molecule type" value="Genomic_DNA"/>
</dbReference>
<dbReference type="EMBL" id="CP002687">
    <property type="protein sequence ID" value="AEE86347.1"/>
    <property type="molecule type" value="Genomic_DNA"/>
</dbReference>
<dbReference type="EMBL" id="AY054633">
    <property type="protein sequence ID" value="AAK96824.1"/>
    <property type="molecule type" value="mRNA"/>
</dbReference>
<dbReference type="EMBL" id="AY081532">
    <property type="protein sequence ID" value="AAM10094.1"/>
    <property type="molecule type" value="mRNA"/>
</dbReference>
<dbReference type="PIR" id="T04770">
    <property type="entry name" value="T04770"/>
</dbReference>
<dbReference type="RefSeq" id="NP_567962.1">
    <molecule id="Q8W033-1"/>
    <property type="nucleotide sequence ID" value="NM_119588.6"/>
</dbReference>
<dbReference type="SMR" id="Q8W033"/>
<dbReference type="FunCoup" id="Q8W033">
    <property type="interactions" value="2112"/>
</dbReference>
<dbReference type="STRING" id="3702.Q8W033"/>
<dbReference type="iPTMnet" id="Q8W033"/>
<dbReference type="PaxDb" id="3702-AT4G34240.1"/>
<dbReference type="ProteomicsDB" id="245025">
    <molecule id="Q8W033-1"/>
</dbReference>
<dbReference type="EnsemblPlants" id="AT4G34240.1">
    <molecule id="Q8W033-1"/>
    <property type="protein sequence ID" value="AT4G34240.1"/>
    <property type="gene ID" value="AT4G34240"/>
</dbReference>
<dbReference type="GeneID" id="829573"/>
<dbReference type="Gramene" id="AT4G34240.1">
    <molecule id="Q8W033-1"/>
    <property type="protein sequence ID" value="AT4G34240.1"/>
    <property type="gene ID" value="AT4G34240"/>
</dbReference>
<dbReference type="KEGG" id="ath:AT4G34240"/>
<dbReference type="Araport" id="AT4G34240"/>
<dbReference type="TAIR" id="AT4G34240">
    <property type="gene designation" value="ALDH3I1"/>
</dbReference>
<dbReference type="eggNOG" id="KOG2456">
    <property type="taxonomic scope" value="Eukaryota"/>
</dbReference>
<dbReference type="HOGENOM" id="CLU_005391_3_0_1"/>
<dbReference type="InParanoid" id="Q8W033"/>
<dbReference type="PhylomeDB" id="Q8W033"/>
<dbReference type="BioCyc" id="ARA:AT4G34240-MONOMER"/>
<dbReference type="PRO" id="PR:Q8W033"/>
<dbReference type="Proteomes" id="UP000006548">
    <property type="component" value="Chromosome 4"/>
</dbReference>
<dbReference type="ExpressionAtlas" id="Q8W033">
    <property type="expression patterns" value="baseline and differential"/>
</dbReference>
<dbReference type="GO" id="GO:0009507">
    <property type="term" value="C:chloroplast"/>
    <property type="evidence" value="ECO:0007005"/>
    <property type="project" value="TAIR"/>
</dbReference>
<dbReference type="GO" id="GO:0009941">
    <property type="term" value="C:chloroplast envelope"/>
    <property type="evidence" value="ECO:0007005"/>
    <property type="project" value="TAIR"/>
</dbReference>
<dbReference type="GO" id="GO:0005886">
    <property type="term" value="C:plasma membrane"/>
    <property type="evidence" value="ECO:0007005"/>
    <property type="project" value="TAIR"/>
</dbReference>
<dbReference type="GO" id="GO:0009536">
    <property type="term" value="C:plastid"/>
    <property type="evidence" value="ECO:0000250"/>
    <property type="project" value="TAIR"/>
</dbReference>
<dbReference type="GO" id="GO:0004028">
    <property type="term" value="F:3-chloroallyl aldehyde dehydrogenase activity"/>
    <property type="evidence" value="ECO:0000250"/>
    <property type="project" value="TAIR"/>
</dbReference>
<dbReference type="GO" id="GO:0004029">
    <property type="term" value="F:aldehyde dehydrogenase (NAD+) activity"/>
    <property type="evidence" value="ECO:0000314"/>
    <property type="project" value="TAIR"/>
</dbReference>
<dbReference type="GO" id="GO:0033721">
    <property type="term" value="F:aldehyde dehydrogenase (NADP+) activity"/>
    <property type="evidence" value="ECO:0000314"/>
    <property type="project" value="TAIR"/>
</dbReference>
<dbReference type="GO" id="GO:0006081">
    <property type="term" value="P:aldehyde metabolic process"/>
    <property type="evidence" value="ECO:0007669"/>
    <property type="project" value="InterPro"/>
</dbReference>
<dbReference type="GO" id="GO:0009737">
    <property type="term" value="P:response to abscisic acid"/>
    <property type="evidence" value="ECO:0000270"/>
    <property type="project" value="TAIR"/>
</dbReference>
<dbReference type="GO" id="GO:0009414">
    <property type="term" value="P:response to water deprivation"/>
    <property type="evidence" value="ECO:0000270"/>
    <property type="project" value="TAIR"/>
</dbReference>
<dbReference type="CDD" id="cd07137">
    <property type="entry name" value="ALDH_F3FHI"/>
    <property type="match status" value="1"/>
</dbReference>
<dbReference type="FunFam" id="3.40.309.10:FF:000003">
    <property type="entry name" value="Aldehyde dehydrogenase"/>
    <property type="match status" value="1"/>
</dbReference>
<dbReference type="FunFam" id="3.40.605.10:FF:000004">
    <property type="entry name" value="Aldehyde dehydrogenase"/>
    <property type="match status" value="1"/>
</dbReference>
<dbReference type="Gene3D" id="3.40.605.10">
    <property type="entry name" value="Aldehyde Dehydrogenase, Chain A, domain 1"/>
    <property type="match status" value="1"/>
</dbReference>
<dbReference type="Gene3D" id="3.40.309.10">
    <property type="entry name" value="Aldehyde Dehydrogenase, Chain A, domain 2"/>
    <property type="match status" value="1"/>
</dbReference>
<dbReference type="InterPro" id="IPR016161">
    <property type="entry name" value="Ald_DH/histidinol_DH"/>
</dbReference>
<dbReference type="InterPro" id="IPR016163">
    <property type="entry name" value="Ald_DH_C"/>
</dbReference>
<dbReference type="InterPro" id="IPR016160">
    <property type="entry name" value="Ald_DH_CS_CYS"/>
</dbReference>
<dbReference type="InterPro" id="IPR016162">
    <property type="entry name" value="Ald_DH_N"/>
</dbReference>
<dbReference type="InterPro" id="IPR015590">
    <property type="entry name" value="Aldehyde_DH_dom"/>
</dbReference>
<dbReference type="InterPro" id="IPR012394">
    <property type="entry name" value="Aldehyde_DH_NAD(P)"/>
</dbReference>
<dbReference type="PANTHER" id="PTHR43570">
    <property type="entry name" value="ALDEHYDE DEHYDROGENASE"/>
    <property type="match status" value="1"/>
</dbReference>
<dbReference type="PANTHER" id="PTHR43570:SF25">
    <property type="entry name" value="ALDEHYDE DEHYDROGENASE FAMILY 3 MEMBER I1, CHLOROPLASTIC"/>
    <property type="match status" value="1"/>
</dbReference>
<dbReference type="Pfam" id="PF00171">
    <property type="entry name" value="Aldedh"/>
    <property type="match status" value="1"/>
</dbReference>
<dbReference type="PIRSF" id="PIRSF036492">
    <property type="entry name" value="ALDH"/>
    <property type="match status" value="1"/>
</dbReference>
<dbReference type="SUPFAM" id="SSF53720">
    <property type="entry name" value="ALDH-like"/>
    <property type="match status" value="1"/>
</dbReference>
<dbReference type="PROSITE" id="PS00070">
    <property type="entry name" value="ALDEHYDE_DEHYDR_CYS"/>
    <property type="match status" value="1"/>
</dbReference>
<gene>
    <name type="primary">ALDH3I1</name>
    <name type="synonym">ALDH3</name>
    <name type="ordered locus">At4g34240</name>
    <name type="ORF">F10M10.10</name>
</gene>
<feature type="transit peptide" description="Chloroplast" evidence="2">
    <location>
        <begin position="1"/>
        <end position="59"/>
    </location>
</feature>
<feature type="chain" id="PRO_0000256061" description="Aldehyde dehydrogenase family 3 member I1, chloroplastic">
    <location>
        <begin position="60"/>
        <end position="550"/>
    </location>
</feature>
<feature type="active site" description="Proton acceptor" evidence="3">
    <location>
        <position position="281"/>
    </location>
</feature>
<feature type="active site" description="Nucleophile" evidence="3">
    <location>
        <position position="316"/>
    </location>
</feature>
<feature type="binding site" evidence="1">
    <location>
        <begin position="259"/>
        <end position="264"/>
    </location>
    <ligand>
        <name>NAD(+)</name>
        <dbReference type="ChEBI" id="CHEBI:57540"/>
    </ligand>
</feature>
<feature type="site" description="Transition state stabilizer" evidence="1">
    <location>
        <position position="186"/>
    </location>
</feature>
<feature type="disulfide bond" description="Interchain">
    <location>
        <position position="114"/>
    </location>
</feature>
<feature type="mutagenesis site" description="No effect on solubility, but loss of dimerization and 80% loss of activity." evidence="7">
    <original>C</original>
    <variation>S</variation>
    <location>
        <position position="114"/>
    </location>
</feature>
<feature type="mutagenesis site" description="No effect on solubility, but decreased activity." evidence="7">
    <original>C</original>
    <variation>S</variation>
    <location>
        <position position="142"/>
    </location>
</feature>
<feature type="mutagenesis site" description="No effect on substrate specificity, but decreased affinity for NADP(+) and increased affinity for NAD(+)." evidence="7">
    <original>V</original>
    <variation>I</variation>
    <location>
        <position position="263"/>
    </location>
</feature>
<feature type="mutagenesis site" description="No effect on solubility, but no effect on activity." evidence="7">
    <original>C</original>
    <variation>S</variation>
    <location>
        <position position="286"/>
    </location>
</feature>
<feature type="mutagenesis site" description="No effect on solubility, but no effect on activity." evidence="7">
    <original>C</original>
    <variation>S</variation>
    <location>
        <position position="310"/>
    </location>
</feature>
<feature type="mutagenesis site" description="No effect on solubility, but loss of activity." evidence="7">
    <original>C</original>
    <variation>S</variation>
    <location>
        <position position="316"/>
    </location>
</feature>
<feature type="sequence conflict" description="In Ref. 1; CAC84903." evidence="8" ref="1">
    <original>R</original>
    <variation>L</variation>
    <location>
        <position position="32"/>
    </location>
</feature>
<feature type="sequence conflict" description="In Ref. 1; CAC84903." evidence="8" ref="1">
    <original>S</original>
    <variation>R</variation>
    <location>
        <position position="71"/>
    </location>
</feature>
<feature type="sequence conflict" description="In Ref. 1; CAC84903." evidence="8" ref="1">
    <original>P</original>
    <variation>S</variation>
    <location>
        <position position="435"/>
    </location>
</feature>
<feature type="sequence conflict" description="In Ref. 1; CAC84903." evidence="8" ref="1">
    <original>I</original>
    <variation>M</variation>
    <location>
        <position position="536"/>
    </location>
</feature>
<protein>
    <recommendedName>
        <fullName>Aldehyde dehydrogenase family 3 member I1, chloroplastic</fullName>
        <shortName>AtALDH3</shortName>
        <shortName>Ath-ALDH3</shortName>
        <ecNumber>1.2.1.3</ecNumber>
    </recommendedName>
</protein>
<reference key="1">
    <citation type="journal article" date="2001" name="Plant J.">
        <title>Novel ABA- and dehydration-inducible aldehyde dehydrogenase genes isolated from the resurrection plant Craterostigma plantagineum and Arabidopsis thaliana.</title>
        <authorList>
            <person name="Kirch H.-H."/>
            <person name="Nair A."/>
            <person name="Bartels D."/>
        </authorList>
    </citation>
    <scope>NUCLEOTIDE SEQUENCE [MRNA]</scope>
    <scope>INDUCTION</scope>
</reference>
<reference key="2">
    <citation type="journal article" date="1999" name="Nature">
        <title>Sequence and analysis of chromosome 4 of the plant Arabidopsis thaliana.</title>
        <authorList>
            <person name="Mayer K.F.X."/>
            <person name="Schueller C."/>
            <person name="Wambutt R."/>
            <person name="Murphy G."/>
            <person name="Volckaert G."/>
            <person name="Pohl T."/>
            <person name="Duesterhoeft A."/>
            <person name="Stiekema W."/>
            <person name="Entian K.-D."/>
            <person name="Terryn N."/>
            <person name="Harris B."/>
            <person name="Ansorge W."/>
            <person name="Brandt P."/>
            <person name="Grivell L.A."/>
            <person name="Rieger M."/>
            <person name="Weichselgartner M."/>
            <person name="de Simone V."/>
            <person name="Obermaier B."/>
            <person name="Mache R."/>
            <person name="Mueller M."/>
            <person name="Kreis M."/>
            <person name="Delseny M."/>
            <person name="Puigdomenech P."/>
            <person name="Watson M."/>
            <person name="Schmidtheini T."/>
            <person name="Reichert B."/>
            <person name="Portetelle D."/>
            <person name="Perez-Alonso M."/>
            <person name="Boutry M."/>
            <person name="Bancroft I."/>
            <person name="Vos P."/>
            <person name="Hoheisel J."/>
            <person name="Zimmermann W."/>
            <person name="Wedler H."/>
            <person name="Ridley P."/>
            <person name="Langham S.-A."/>
            <person name="McCullagh B."/>
            <person name="Bilham L."/>
            <person name="Robben J."/>
            <person name="van der Schueren J."/>
            <person name="Grymonprez B."/>
            <person name="Chuang Y.-J."/>
            <person name="Vandenbussche F."/>
            <person name="Braeken M."/>
            <person name="Weltjens I."/>
            <person name="Voet M."/>
            <person name="Bastiaens I."/>
            <person name="Aert R."/>
            <person name="Defoor E."/>
            <person name="Weitzenegger T."/>
            <person name="Bothe G."/>
            <person name="Ramsperger U."/>
            <person name="Hilbert H."/>
            <person name="Braun M."/>
            <person name="Holzer E."/>
            <person name="Brandt A."/>
            <person name="Peters S."/>
            <person name="van Staveren M."/>
            <person name="Dirkse W."/>
            <person name="Mooijman P."/>
            <person name="Klein Lankhorst R."/>
            <person name="Rose M."/>
            <person name="Hauf J."/>
            <person name="Koetter P."/>
            <person name="Berneiser S."/>
            <person name="Hempel S."/>
            <person name="Feldpausch M."/>
            <person name="Lamberth S."/>
            <person name="Van den Daele H."/>
            <person name="De Keyser A."/>
            <person name="Buysshaert C."/>
            <person name="Gielen J."/>
            <person name="Villarroel R."/>
            <person name="De Clercq R."/>
            <person name="van Montagu M."/>
            <person name="Rogers J."/>
            <person name="Cronin A."/>
            <person name="Quail M.A."/>
            <person name="Bray-Allen S."/>
            <person name="Clark L."/>
            <person name="Doggett J."/>
            <person name="Hall S."/>
            <person name="Kay M."/>
            <person name="Lennard N."/>
            <person name="McLay K."/>
            <person name="Mayes R."/>
            <person name="Pettett A."/>
            <person name="Rajandream M.A."/>
            <person name="Lyne M."/>
            <person name="Benes V."/>
            <person name="Rechmann S."/>
            <person name="Borkova D."/>
            <person name="Bloecker H."/>
            <person name="Scharfe M."/>
            <person name="Grimm M."/>
            <person name="Loehnert T.-H."/>
            <person name="Dose S."/>
            <person name="de Haan M."/>
            <person name="Maarse A.C."/>
            <person name="Schaefer M."/>
            <person name="Mueller-Auer S."/>
            <person name="Gabel C."/>
            <person name="Fuchs M."/>
            <person name="Fartmann B."/>
            <person name="Granderath K."/>
            <person name="Dauner D."/>
            <person name="Herzl A."/>
            <person name="Neumann S."/>
            <person name="Argiriou A."/>
            <person name="Vitale D."/>
            <person name="Liguori R."/>
            <person name="Piravandi E."/>
            <person name="Massenet O."/>
            <person name="Quigley F."/>
            <person name="Clabauld G."/>
            <person name="Muendlein A."/>
            <person name="Felber R."/>
            <person name="Schnabl S."/>
            <person name="Hiller R."/>
            <person name="Schmidt W."/>
            <person name="Lecharny A."/>
            <person name="Aubourg S."/>
            <person name="Chefdor F."/>
            <person name="Cooke R."/>
            <person name="Berger C."/>
            <person name="Monfort A."/>
            <person name="Casacuberta E."/>
            <person name="Gibbons T."/>
            <person name="Weber N."/>
            <person name="Vandenbol M."/>
            <person name="Bargues M."/>
            <person name="Terol J."/>
            <person name="Torres A."/>
            <person name="Perez-Perez A."/>
            <person name="Purnelle B."/>
            <person name="Bent E."/>
            <person name="Johnson S."/>
            <person name="Tacon D."/>
            <person name="Jesse T."/>
            <person name="Heijnen L."/>
            <person name="Schwarz S."/>
            <person name="Scholler P."/>
            <person name="Heber S."/>
            <person name="Francs P."/>
            <person name="Bielke C."/>
            <person name="Frishman D."/>
            <person name="Haase D."/>
            <person name="Lemcke K."/>
            <person name="Mewes H.-W."/>
            <person name="Stocker S."/>
            <person name="Zaccaria P."/>
            <person name="Bevan M."/>
            <person name="Wilson R.K."/>
            <person name="de la Bastide M."/>
            <person name="Habermann K."/>
            <person name="Parnell L."/>
            <person name="Dedhia N."/>
            <person name="Gnoj L."/>
            <person name="Schutz K."/>
            <person name="Huang E."/>
            <person name="Spiegel L."/>
            <person name="Sekhon M."/>
            <person name="Murray J."/>
            <person name="Sheet P."/>
            <person name="Cordes M."/>
            <person name="Abu-Threideh J."/>
            <person name="Stoneking T."/>
            <person name="Kalicki J."/>
            <person name="Graves T."/>
            <person name="Harmon G."/>
            <person name="Edwards J."/>
            <person name="Latreille P."/>
            <person name="Courtney L."/>
            <person name="Cloud J."/>
            <person name="Abbott A."/>
            <person name="Scott K."/>
            <person name="Johnson D."/>
            <person name="Minx P."/>
            <person name="Bentley D."/>
            <person name="Fulton B."/>
            <person name="Miller N."/>
            <person name="Greco T."/>
            <person name="Kemp K."/>
            <person name="Kramer J."/>
            <person name="Fulton L."/>
            <person name="Mardis E."/>
            <person name="Dante M."/>
            <person name="Pepin K."/>
            <person name="Hillier L.W."/>
            <person name="Nelson J."/>
            <person name="Spieth J."/>
            <person name="Ryan E."/>
            <person name="Andrews S."/>
            <person name="Geisel C."/>
            <person name="Layman D."/>
            <person name="Du H."/>
            <person name="Ali J."/>
            <person name="Berghoff A."/>
            <person name="Jones K."/>
            <person name="Drone K."/>
            <person name="Cotton M."/>
            <person name="Joshu C."/>
            <person name="Antonoiu B."/>
            <person name="Zidanic M."/>
            <person name="Strong C."/>
            <person name="Sun H."/>
            <person name="Lamar B."/>
            <person name="Yordan C."/>
            <person name="Ma P."/>
            <person name="Zhong J."/>
            <person name="Preston R."/>
            <person name="Vil D."/>
            <person name="Shekher M."/>
            <person name="Matero A."/>
            <person name="Shah R."/>
            <person name="Swaby I.K."/>
            <person name="O'Shaughnessy A."/>
            <person name="Rodriguez M."/>
            <person name="Hoffman J."/>
            <person name="Till S."/>
            <person name="Granat S."/>
            <person name="Shohdy N."/>
            <person name="Hasegawa A."/>
            <person name="Hameed A."/>
            <person name="Lodhi M."/>
            <person name="Johnson A."/>
            <person name="Chen E."/>
            <person name="Marra M.A."/>
            <person name="Martienssen R."/>
            <person name="McCombie W.R."/>
        </authorList>
    </citation>
    <scope>NUCLEOTIDE SEQUENCE [LARGE SCALE GENOMIC DNA]</scope>
    <source>
        <strain>cv. Columbia</strain>
    </source>
</reference>
<reference key="3">
    <citation type="journal article" date="2017" name="Plant J.">
        <title>Araport11: a complete reannotation of the Arabidopsis thaliana reference genome.</title>
        <authorList>
            <person name="Cheng C.Y."/>
            <person name="Krishnakumar V."/>
            <person name="Chan A.P."/>
            <person name="Thibaud-Nissen F."/>
            <person name="Schobel S."/>
            <person name="Town C.D."/>
        </authorList>
    </citation>
    <scope>GENOME REANNOTATION</scope>
    <source>
        <strain>cv. Columbia</strain>
    </source>
</reference>
<reference key="4">
    <citation type="journal article" date="2003" name="Science">
        <title>Empirical analysis of transcriptional activity in the Arabidopsis genome.</title>
        <authorList>
            <person name="Yamada K."/>
            <person name="Lim J."/>
            <person name="Dale J.M."/>
            <person name="Chen H."/>
            <person name="Shinn P."/>
            <person name="Palm C.J."/>
            <person name="Southwick A.M."/>
            <person name="Wu H.C."/>
            <person name="Kim C.J."/>
            <person name="Nguyen M."/>
            <person name="Pham P.K."/>
            <person name="Cheuk R.F."/>
            <person name="Karlin-Newmann G."/>
            <person name="Liu S.X."/>
            <person name="Lam B."/>
            <person name="Sakano H."/>
            <person name="Wu T."/>
            <person name="Yu G."/>
            <person name="Miranda M."/>
            <person name="Quach H.L."/>
            <person name="Tripp M."/>
            <person name="Chang C.H."/>
            <person name="Lee J.M."/>
            <person name="Toriumi M.J."/>
            <person name="Chan M.M."/>
            <person name="Tang C.C."/>
            <person name="Onodera C.S."/>
            <person name="Deng J.M."/>
            <person name="Akiyama K."/>
            <person name="Ansari Y."/>
            <person name="Arakawa T."/>
            <person name="Banh J."/>
            <person name="Banno F."/>
            <person name="Bowser L."/>
            <person name="Brooks S.Y."/>
            <person name="Carninci P."/>
            <person name="Chao Q."/>
            <person name="Choy N."/>
            <person name="Enju A."/>
            <person name="Goldsmith A.D."/>
            <person name="Gurjal M."/>
            <person name="Hansen N.F."/>
            <person name="Hayashizaki Y."/>
            <person name="Johnson-Hopson C."/>
            <person name="Hsuan V.W."/>
            <person name="Iida K."/>
            <person name="Karnes M."/>
            <person name="Khan S."/>
            <person name="Koesema E."/>
            <person name="Ishida J."/>
            <person name="Jiang P.X."/>
            <person name="Jones T."/>
            <person name="Kawai J."/>
            <person name="Kamiya A."/>
            <person name="Meyers C."/>
            <person name="Nakajima M."/>
            <person name="Narusaka M."/>
            <person name="Seki M."/>
            <person name="Sakurai T."/>
            <person name="Satou M."/>
            <person name="Tamse R."/>
            <person name="Vaysberg M."/>
            <person name="Wallender E.K."/>
            <person name="Wong C."/>
            <person name="Yamamura Y."/>
            <person name="Yuan S."/>
            <person name="Shinozaki K."/>
            <person name="Davis R.W."/>
            <person name="Theologis A."/>
            <person name="Ecker J.R."/>
        </authorList>
    </citation>
    <scope>NUCLEOTIDE SEQUENCE [LARGE SCALE MRNA]</scope>
    <source>
        <strain>cv. Columbia</strain>
    </source>
</reference>
<reference key="5">
    <citation type="journal article" date="2003" name="Plant J.">
        <title>Overexpression of a stress-inducible aldehyde dehydrogenase gene from Arabidopsis thaliana in transgenic plants improves stress tolerance.</title>
        <authorList>
            <person name="Sunkar R."/>
            <person name="Bartels D."/>
            <person name="Kirch H.-H."/>
        </authorList>
    </citation>
    <scope>FUNCTION</scope>
    <scope>INDUCTION</scope>
</reference>
<reference key="6">
    <citation type="journal article" date="2004" name="Trends Plant Sci.">
        <title>The ALDH gene superfamily of Arabidopsis.</title>
        <authorList>
            <person name="Kirch H.-H."/>
            <person name="Bartels D."/>
            <person name="Wei Y."/>
            <person name="Schnable P.S."/>
            <person name="Wood A.J."/>
        </authorList>
    </citation>
    <scope>NOMENCLATURE</scope>
</reference>
<reference key="7">
    <citation type="journal article" date="2005" name="Plant Mol. Biol.">
        <title>Detailed expression analysis of selected genes of the aldehyde dehydrogenase(ALDH) gene superfamily in Arabidopsis thaliana.</title>
        <authorList>
            <person name="Kirch H.-H."/>
            <person name="Schlingensiepen S."/>
            <person name="Kotchoni S."/>
            <person name="Sunkar R."/>
            <person name="Bartels D."/>
        </authorList>
    </citation>
    <scope>INDUCTION</scope>
</reference>
<reference key="8">
    <citation type="journal article" date="2011" name="Biochem. J.">
        <title>Engineering the nucleotide coenzyme specificity and sulfhydryl redox sensitivity of two stress-responsive aldehyde dehydrogenase isoenzymes of Arabidopsis thaliana.</title>
        <authorList>
            <person name="Stiti N."/>
            <person name="Adewale I.O."/>
            <person name="Petersen J."/>
            <person name="Bartels D."/>
            <person name="Kirch H.H."/>
        </authorList>
    </citation>
    <scope>FUNCTION</scope>
    <scope>CATALYTIC ACTIVITY</scope>
    <scope>BIOPHYSICOCHEMICAL PROPERTIES</scope>
    <scope>SUBUNIT</scope>
    <scope>MUTAGENESIS OF CYS-114; CYS-142; VAL-263; CYS-286; CYS-310 AND CYS-316</scope>
    <scope>ACTIVITY REGULATION</scope>
    <scope>3D-STRUCTURE MODELING</scope>
</reference>
<reference key="9">
    <citation type="journal article" date="2014" name="Biochim. Biophys. Acta">
        <title>Aldehyde dehydrogenase enzyme ALDH3H1 from Arabidopsis thaliana: Identification of amino acid residues critical for cofactor specificity.</title>
        <authorList>
            <person name="Stiti N."/>
            <person name="Podgorska K."/>
            <person name="Bartels D."/>
        </authorList>
    </citation>
    <scope>3D-STRUCTURE MODELING</scope>
</reference>